<comment type="function">
    <text evidence="1">Component of the eukaryotic translation initiation factor 3 (eIF-3) complex, which is involved in protein synthesis of a specialized repertoire of mRNAs and, together with other initiation factors, stimulates binding of mRNA and methionyl-tRNAi to the 40S ribosome. The eIF-3 complex specifically targets and initiates translation of a subset of mRNAs involved in cell proliferation.</text>
</comment>
<comment type="subunit">
    <text evidence="1">Component of the eukaryotic translation initiation factor 3 (eIF-3) complex.</text>
</comment>
<comment type="subcellular location">
    <subcellularLocation>
        <location evidence="1">Cytoplasm</location>
    </subcellularLocation>
</comment>
<comment type="similarity">
    <text evidence="1">Belongs to the eIF-3 subunit K family.</text>
</comment>
<reference key="1">
    <citation type="journal article" date="2007" name="Science">
        <title>Draft genome of the filarial nematode parasite Brugia malayi.</title>
        <authorList>
            <person name="Ghedin E."/>
            <person name="Wang S."/>
            <person name="Spiro D."/>
            <person name="Caler E."/>
            <person name="Zhao Q."/>
            <person name="Crabtree J."/>
            <person name="Allen J.E."/>
            <person name="Delcher A.L."/>
            <person name="Guiliano D.B."/>
            <person name="Miranda-Saavedra D."/>
            <person name="Angiuoli S.V."/>
            <person name="Creasy T."/>
            <person name="Amedeo P."/>
            <person name="Haas B."/>
            <person name="El-Sayed N.M."/>
            <person name="Wortman J.R."/>
            <person name="Feldblyum T."/>
            <person name="Tallon L."/>
            <person name="Schatz M."/>
            <person name="Shumway M."/>
            <person name="Koo H."/>
            <person name="Salzberg S.L."/>
            <person name="Schobel S."/>
            <person name="Pertea M."/>
            <person name="Pop M."/>
            <person name="White O."/>
            <person name="Barton G.J."/>
            <person name="Carlow C.K.S."/>
            <person name="Crawford M.J."/>
            <person name="Daub J."/>
            <person name="Dimmic M.W."/>
            <person name="Estes C.F."/>
            <person name="Foster J.M."/>
            <person name="Ganatra M."/>
            <person name="Gregory W.F."/>
            <person name="Johnson N.M."/>
            <person name="Jin J."/>
            <person name="Komuniecki R."/>
            <person name="Korf I."/>
            <person name="Kumar S."/>
            <person name="Laney S."/>
            <person name="Li B.-W."/>
            <person name="Li W."/>
            <person name="Lindblom T.H."/>
            <person name="Lustigman S."/>
            <person name="Ma D."/>
            <person name="Maina C.V."/>
            <person name="Martin D.M."/>
            <person name="McCarter J.P."/>
            <person name="McReynolds L."/>
            <person name="Mitreva M."/>
            <person name="Nutman T.B."/>
            <person name="Parkinson J."/>
            <person name="Peregrin-Alvarez J.M."/>
            <person name="Poole C."/>
            <person name="Ren Q."/>
            <person name="Saunders L."/>
            <person name="Sluder A.E."/>
            <person name="Smith K."/>
            <person name="Stanke M."/>
            <person name="Unnasch T.R."/>
            <person name="Ware J."/>
            <person name="Wei A.D."/>
            <person name="Weil G."/>
            <person name="Williams D.J."/>
            <person name="Zhang Y."/>
            <person name="Williams S.A."/>
            <person name="Fraser-Liggett C."/>
            <person name="Slatko B."/>
            <person name="Blaxter M.L."/>
            <person name="Scott A.L."/>
        </authorList>
    </citation>
    <scope>NUCLEOTIDE SEQUENCE [LARGE SCALE GENOMIC DNA]</scope>
</reference>
<feature type="chain" id="PRO_0000365035" description="Eukaryotic translation initiation factor 3 subunit K">
    <location>
        <begin position="1"/>
        <end position="236"/>
    </location>
</feature>
<feature type="domain" description="PCI" evidence="2">
    <location>
        <begin position="42"/>
        <end position="222"/>
    </location>
</feature>
<gene>
    <name type="ORF">Bm1_52955</name>
</gene>
<proteinExistence type="inferred from homology"/>
<evidence type="ECO:0000255" key="1">
    <source>
        <dbReference type="HAMAP-Rule" id="MF_03010"/>
    </source>
</evidence>
<evidence type="ECO:0000255" key="2">
    <source>
        <dbReference type="PROSITE-ProRule" id="PRU01185"/>
    </source>
</evidence>
<protein>
    <recommendedName>
        <fullName evidence="1">Eukaryotic translation initiation factor 3 subunit K</fullName>
        <shortName evidence="1">eIF3k</shortName>
    </recommendedName>
    <alternativeName>
        <fullName evidence="1">eIF-3 p25</fullName>
    </alternativeName>
</protein>
<name>EIF3K_BRUMA</name>
<keyword id="KW-0963">Cytoplasm</keyword>
<keyword id="KW-0396">Initiation factor</keyword>
<keyword id="KW-0648">Protein biosynthesis</keyword>
<keyword id="KW-1185">Reference proteome</keyword>
<organism>
    <name type="scientific">Brugia malayi</name>
    <name type="common">Filarial nematode worm</name>
    <dbReference type="NCBI Taxonomy" id="6279"/>
    <lineage>
        <taxon>Eukaryota</taxon>
        <taxon>Metazoa</taxon>
        <taxon>Ecdysozoa</taxon>
        <taxon>Nematoda</taxon>
        <taxon>Chromadorea</taxon>
        <taxon>Rhabditida</taxon>
        <taxon>Spirurina</taxon>
        <taxon>Spiruromorpha</taxon>
        <taxon>Filarioidea</taxon>
        <taxon>Onchocercidae</taxon>
        <taxon>Brugia</taxon>
    </lineage>
</organism>
<dbReference type="EMBL" id="DS239431">
    <property type="protein sequence ID" value="EDP29618.1"/>
    <property type="molecule type" value="Genomic_DNA"/>
</dbReference>
<dbReference type="RefSeq" id="XP_001902059.1">
    <property type="nucleotide sequence ID" value="XM_001902024.1"/>
</dbReference>
<dbReference type="SMR" id="A8QDN3"/>
<dbReference type="FunCoup" id="A8QDN3">
    <property type="interactions" value="1777"/>
</dbReference>
<dbReference type="STRING" id="6279.A8QDN3"/>
<dbReference type="WormBase" id="Bm5813">
    <property type="protein sequence ID" value="BM39383"/>
    <property type="gene ID" value="WBGene00226074"/>
    <property type="gene designation" value="Bma-eif-3.K"/>
</dbReference>
<dbReference type="InParanoid" id="A8QDN3"/>
<dbReference type="Proteomes" id="UP000006672">
    <property type="component" value="Unassembled WGS sequence"/>
</dbReference>
<dbReference type="GO" id="GO:0016282">
    <property type="term" value="C:eukaryotic 43S preinitiation complex"/>
    <property type="evidence" value="ECO:0007669"/>
    <property type="project" value="UniProtKB-UniRule"/>
</dbReference>
<dbReference type="GO" id="GO:0033290">
    <property type="term" value="C:eukaryotic 48S preinitiation complex"/>
    <property type="evidence" value="ECO:0007669"/>
    <property type="project" value="UniProtKB-UniRule"/>
</dbReference>
<dbReference type="GO" id="GO:0005852">
    <property type="term" value="C:eukaryotic translation initiation factor 3 complex"/>
    <property type="evidence" value="ECO:0007669"/>
    <property type="project" value="UniProtKB-UniRule"/>
</dbReference>
<dbReference type="GO" id="GO:0043022">
    <property type="term" value="F:ribosome binding"/>
    <property type="evidence" value="ECO:0007669"/>
    <property type="project" value="InterPro"/>
</dbReference>
<dbReference type="GO" id="GO:0003723">
    <property type="term" value="F:RNA binding"/>
    <property type="evidence" value="ECO:0007669"/>
    <property type="project" value="UniProtKB-UniRule"/>
</dbReference>
<dbReference type="GO" id="GO:0003743">
    <property type="term" value="F:translation initiation factor activity"/>
    <property type="evidence" value="ECO:0007669"/>
    <property type="project" value="UniProtKB-UniRule"/>
</dbReference>
<dbReference type="GO" id="GO:0001732">
    <property type="term" value="P:formation of cytoplasmic translation initiation complex"/>
    <property type="evidence" value="ECO:0007669"/>
    <property type="project" value="UniProtKB-UniRule"/>
</dbReference>
<dbReference type="GO" id="GO:0006446">
    <property type="term" value="P:regulation of translational initiation"/>
    <property type="evidence" value="ECO:0007669"/>
    <property type="project" value="InterPro"/>
</dbReference>
<dbReference type="FunFam" id="1.10.10.10:FF:000212">
    <property type="entry name" value="Eukaryotic translation initiation factor 3 subunit K"/>
    <property type="match status" value="1"/>
</dbReference>
<dbReference type="FunFam" id="1.25.40.250:FF:000008">
    <property type="entry name" value="Eukaryotic translation initiation factor 3 subunit K"/>
    <property type="match status" value="1"/>
</dbReference>
<dbReference type="Gene3D" id="1.25.40.250">
    <property type="entry name" value="ARM repeat, domain 1"/>
    <property type="match status" value="1"/>
</dbReference>
<dbReference type="Gene3D" id="1.10.10.10">
    <property type="entry name" value="Winged helix-like DNA-binding domain superfamily/Winged helix DNA-binding domain"/>
    <property type="match status" value="1"/>
</dbReference>
<dbReference type="HAMAP" id="MF_03010">
    <property type="entry name" value="eIF3k"/>
    <property type="match status" value="1"/>
</dbReference>
<dbReference type="InterPro" id="IPR016024">
    <property type="entry name" value="ARM-type_fold"/>
</dbReference>
<dbReference type="InterPro" id="IPR033464">
    <property type="entry name" value="CSN8_PSD8_EIF3K"/>
</dbReference>
<dbReference type="InterPro" id="IPR009374">
    <property type="entry name" value="eIF3k"/>
</dbReference>
<dbReference type="InterPro" id="IPR000717">
    <property type="entry name" value="PCI_dom"/>
</dbReference>
<dbReference type="InterPro" id="IPR016020">
    <property type="entry name" value="Transl_init_fac_sub12_N_euk"/>
</dbReference>
<dbReference type="InterPro" id="IPR036388">
    <property type="entry name" value="WH-like_DNA-bd_sf"/>
</dbReference>
<dbReference type="InterPro" id="IPR036390">
    <property type="entry name" value="WH_DNA-bd_sf"/>
</dbReference>
<dbReference type="PANTHER" id="PTHR13022">
    <property type="entry name" value="EUKARYOTIC TRANSLATION INITIATION FACTOR 3 SUBUNIT 11"/>
    <property type="match status" value="1"/>
</dbReference>
<dbReference type="PANTHER" id="PTHR13022:SF0">
    <property type="entry name" value="EUKARYOTIC TRANSLATION INITIATION FACTOR 3 SUBUNIT K"/>
    <property type="match status" value="1"/>
</dbReference>
<dbReference type="Pfam" id="PF10075">
    <property type="entry name" value="CSN8_PSD8_EIF3K"/>
    <property type="match status" value="1"/>
</dbReference>
<dbReference type="SUPFAM" id="SSF48371">
    <property type="entry name" value="ARM repeat"/>
    <property type="match status" value="1"/>
</dbReference>
<dbReference type="SUPFAM" id="SSF46785">
    <property type="entry name" value="Winged helix' DNA-binding domain"/>
    <property type="match status" value="1"/>
</dbReference>
<dbReference type="PROSITE" id="PS50250">
    <property type="entry name" value="PCI"/>
    <property type="match status" value="1"/>
</dbReference>
<accession>A8QDN3</accession>
<sequence length="236" mass="27192">MSIFVELKSKLDQAITGVNRYNPNNVETLESCIEAMVQENQYDKDILVTTLKLYQLNPDKYNESVVKLILLKTMMMAPKSDYALAKYLIDSSRVGSPELKRIFDIGALLESCNFAVFWRLMRGDYRPLDDVNEPFRQPGEIPKIIKAVPGFEESVRNYACQVINVTFQNIEKSLLVRLLGGVSDKQVNEYARYYGWIPKENGEVYFVQNHEATIKSRNIEEKLQFDILFSLIAENV</sequence>